<reference key="1">
    <citation type="journal article" date="2003" name="Nature">
        <title>The DNA sequence and analysis of human chromosome 14.</title>
        <authorList>
            <person name="Heilig R."/>
            <person name="Eckenberg R."/>
            <person name="Petit J.-L."/>
            <person name="Fonknechten N."/>
            <person name="Da Silva C."/>
            <person name="Cattolico L."/>
            <person name="Levy M."/>
            <person name="Barbe V."/>
            <person name="De Berardinis V."/>
            <person name="Ureta-Vidal A."/>
            <person name="Pelletier E."/>
            <person name="Vico V."/>
            <person name="Anthouard V."/>
            <person name="Rowen L."/>
            <person name="Madan A."/>
            <person name="Qin S."/>
            <person name="Sun H."/>
            <person name="Du H."/>
            <person name="Pepin K."/>
            <person name="Artiguenave F."/>
            <person name="Robert C."/>
            <person name="Cruaud C."/>
            <person name="Bruels T."/>
            <person name="Jaillon O."/>
            <person name="Friedlander L."/>
            <person name="Samson G."/>
            <person name="Brottier P."/>
            <person name="Cure S."/>
            <person name="Segurens B."/>
            <person name="Aniere F."/>
            <person name="Samain S."/>
            <person name="Crespeau H."/>
            <person name="Abbasi N."/>
            <person name="Aiach N."/>
            <person name="Boscus D."/>
            <person name="Dickhoff R."/>
            <person name="Dors M."/>
            <person name="Dubois I."/>
            <person name="Friedman C."/>
            <person name="Gouyvenoux M."/>
            <person name="James R."/>
            <person name="Madan A."/>
            <person name="Mairey-Estrada B."/>
            <person name="Mangenot S."/>
            <person name="Martins N."/>
            <person name="Menard M."/>
            <person name="Oztas S."/>
            <person name="Ratcliffe A."/>
            <person name="Shaffer T."/>
            <person name="Trask B."/>
            <person name="Vacherie B."/>
            <person name="Bellemere C."/>
            <person name="Belser C."/>
            <person name="Besnard-Gonnet M."/>
            <person name="Bartol-Mavel D."/>
            <person name="Boutard M."/>
            <person name="Briez-Silla S."/>
            <person name="Combette S."/>
            <person name="Dufosse-Laurent V."/>
            <person name="Ferron C."/>
            <person name="Lechaplais C."/>
            <person name="Louesse C."/>
            <person name="Muselet D."/>
            <person name="Magdelenat G."/>
            <person name="Pateau E."/>
            <person name="Petit E."/>
            <person name="Sirvain-Trukniewicz P."/>
            <person name="Trybou A."/>
            <person name="Vega-Czarny N."/>
            <person name="Bataille E."/>
            <person name="Bluet E."/>
            <person name="Bordelais I."/>
            <person name="Dubois M."/>
            <person name="Dumont C."/>
            <person name="Guerin T."/>
            <person name="Haffray S."/>
            <person name="Hammadi R."/>
            <person name="Muanga J."/>
            <person name="Pellouin V."/>
            <person name="Robert D."/>
            <person name="Wunderle E."/>
            <person name="Gauguet G."/>
            <person name="Roy A."/>
            <person name="Sainte-Marthe L."/>
            <person name="Verdier J."/>
            <person name="Verdier-Discala C."/>
            <person name="Hillier L.W."/>
            <person name="Fulton L."/>
            <person name="McPherson J."/>
            <person name="Matsuda F."/>
            <person name="Wilson R."/>
            <person name="Scarpelli C."/>
            <person name="Gyapay G."/>
            <person name="Wincker P."/>
            <person name="Saurin W."/>
            <person name="Quetier F."/>
            <person name="Waterston R."/>
            <person name="Hood L."/>
            <person name="Weissenbach J."/>
        </authorList>
    </citation>
    <scope>NUCLEOTIDE SEQUENCE [LARGE SCALE GENOMIC DNA] (IMGT ALLELE TRAV18*01)</scope>
</reference>
<reference key="2">
    <citation type="book" date="2001" name="The T Cell Receptor FactsBook.">
        <title>The T Cell Receptor FactsBook.</title>
        <editorList>
            <person name="Lefranc M.P."/>
            <person name="Lefranc G."/>
        </editorList>
        <authorList>
            <person name="Lefranc M.P."/>
            <person name="Lefranc G."/>
        </authorList>
    </citation>
    <scope>NOMENCLATURE</scope>
</reference>
<reference key="3">
    <citation type="journal article" date="2004" name="Nat. Rev. Immunol.">
        <title>The many important facets of T-cell repertoire diversity.</title>
        <authorList>
            <person name="Nikolich-Zugich J."/>
            <person name="Slifka M.K."/>
            <person name="Messaoudi I."/>
        </authorList>
    </citation>
    <scope>REVIEW ON T CELL REPERTOIRE DIVERSITY</scope>
</reference>
<reference key="4">
    <citation type="journal article" date="2010" name="Cold Spring Harb. Perspect. Biol.">
        <title>Structural biology of the T-cell receptor: insights into receptor assembly, ligand recognition, and initiation of signaling.</title>
        <authorList>
            <person name="Wucherpfennig K.W."/>
            <person name="Gagnon E."/>
            <person name="Call M.J."/>
            <person name="Huseby E.S."/>
            <person name="Call M.E."/>
        </authorList>
    </citation>
    <scope>REVIEW ON T CELL RECEPTOR-CD3 COMPLEX ASSEMBLY</scope>
    <scope>SUBCELLULAR LOCATION</scope>
</reference>
<reference key="5">
    <citation type="journal article" date="2013" name="Nat. Rev. Immunol.">
        <title>T cell receptor signalling networks: branched, diversified and bounded.</title>
        <authorList>
            <person name="Brownlie R.J."/>
            <person name="Zamoyska R."/>
        </authorList>
    </citation>
    <scope>REVIEW ON T CELL RECEPTOR SIGNALING</scope>
</reference>
<reference key="6">
    <citation type="journal article" date="2014" name="Front. Immunol.">
        <title>Immunoglobulin and T Cell Receptor Genes: IMGT((R)) and the Birth and Rise of Immunoinformatics.</title>
        <authorList>
            <person name="Lefranc M.P."/>
        </authorList>
    </citation>
    <scope>NOMENCLATURE</scope>
</reference>
<reference key="7">
    <citation type="journal article" date="2015" name="Annu. Rev. Immunol.">
        <title>T cell antigen receptor recognition of antigen-presenting molecules.</title>
        <authorList>
            <person name="Rossjohn J."/>
            <person name="Gras S."/>
            <person name="Miles J.J."/>
            <person name="Turner S.J."/>
            <person name="Godfrey D.I."/>
            <person name="McCluskey J."/>
        </authorList>
    </citation>
    <scope>REVIEW ON FUNCTION</scope>
</reference>
<name>TVA18_HUMAN</name>
<gene>
    <name evidence="8" type="primary">TRAV18</name>
</gene>
<comment type="function">
    <text evidence="3 5 6 7">V region of the variable domain of T cell receptor (TR) alpha chain that participates in the antigen recognition (PubMed:24600447). Alpha-beta T cell receptors are antigen specific receptors which are essential to the immune response and are present on the cell surface of T lymphocytes. Recognize peptide-major histocompatibility (MH) (pMH) complexes that are displayed by antigen presenting cells (APC), a prerequisite for efficient T cell adaptive immunity against pathogens (PubMed:25493333). Binding of alpha-beta TR to pMH complex initiates TR-CD3 clustering on the cell surface and intracellular activation of LCK that phosphorylates the ITAM motifs of CD3G, CD3D, CD3E and CD247 enabling the recruitment of ZAP70. In turn ZAP70 phosphorylates LAT, which recruits numerous signaling molecules to form the LAT signalosome. The LAT signalosome propagates signal branching to three major signaling pathways, the calcium, the mitogen-activated protein kinase (MAPK) kinase and the nuclear factor NF-kappa-B (NF-kB) pathways, leading to the mobilization of transcription factors that are critical for gene expression and essential for T cell growth and differentiation (PubMed:23524462). The T cell repertoire is generated in the thymus, by V-(D)-J rearrangement. This repertoire is then shaped by intrathymic selection events to generate a peripheral T cell pool of self-MH restricted, non-autoaggressive T cells. Post-thymic interaction of alpha-beta TR with the pMH complexes shapes TR structural and functional avidity (PubMed:15040585).</text>
</comment>
<comment type="subunit">
    <text evidence="4">Alpha-beta TR is a heterodimer composed of an alpha and beta chain; disulfide-linked. The alpha-beta TR is associated with the transmembrane signaling CD3 coreceptor proteins to form the TR-CD3 (TcR or TCR). The assembly of alpha-beta TR heterodimers with CD3 occurs in the endoplasmic reticulum where a single alpha-beta TR heterodimer associates with one CD3D-CD3E heterodimer, one CD3G-CD3E heterodimer and one CD247 homodimer forming a stable octameric structure. CD3D-CD3E and CD3G-CD3E heterodimers preferentially associate with TR alpha and TR beta chains, respectively. The association of the CD247 homodimer is the last step of TcR assembly in the endoplasmic reticulum and is required for transport to the cell surface.</text>
</comment>
<comment type="subcellular location">
    <subcellularLocation>
        <location evidence="4">Cell membrane</location>
    </subcellularLocation>
</comment>
<comment type="polymorphism">
    <text evidence="9">There are several alleles. The sequence shown is that of IMGT allele TRAV18*01.</text>
</comment>
<sequence length="111" mass="12414">MLSASCSGLVILLIFRRTSGDSVTQTEGPVTLPERAALTLNCTYQSSYSTFLFWYVQYLNKEPELLLKSSENQETDSRGFQASPIKSDSSFHLEKPSVQLSDSAVYYCALR</sequence>
<protein>
    <recommendedName>
        <fullName evidence="8">T cell receptor alpha variable 18</fullName>
    </recommendedName>
</protein>
<accession>A0A075B6X5</accession>
<organism>
    <name type="scientific">Homo sapiens</name>
    <name type="common">Human</name>
    <dbReference type="NCBI Taxonomy" id="9606"/>
    <lineage>
        <taxon>Eukaryota</taxon>
        <taxon>Metazoa</taxon>
        <taxon>Chordata</taxon>
        <taxon>Craniata</taxon>
        <taxon>Vertebrata</taxon>
        <taxon>Euteleostomi</taxon>
        <taxon>Mammalia</taxon>
        <taxon>Eutheria</taxon>
        <taxon>Euarchontoglires</taxon>
        <taxon>Primates</taxon>
        <taxon>Haplorrhini</taxon>
        <taxon>Catarrhini</taxon>
        <taxon>Hominidae</taxon>
        <taxon>Homo</taxon>
    </lineage>
</organism>
<keyword id="KW-1064">Adaptive immunity</keyword>
<keyword id="KW-1003">Cell membrane</keyword>
<keyword id="KW-1015">Disulfide bond</keyword>
<keyword id="KW-0325">Glycoprotein</keyword>
<keyword id="KW-0391">Immunity</keyword>
<keyword id="KW-0393">Immunoglobulin domain</keyword>
<keyword id="KW-0472">Membrane</keyword>
<keyword id="KW-0675">Receptor</keyword>
<keyword id="KW-1185">Reference proteome</keyword>
<keyword id="KW-0732">Signal</keyword>
<keyword id="KW-1279">T cell receptor</keyword>
<feature type="signal peptide" evidence="1">
    <location>
        <begin position="1"/>
        <end position="20"/>
    </location>
</feature>
<feature type="chain" id="PRO_5001705780" description="T cell receptor alpha variable 18" evidence="1">
    <location>
        <begin position="21"/>
        <end position="111"/>
    </location>
</feature>
<feature type="domain" description="Ig-like" evidence="2">
    <location>
        <begin position="21"/>
        <end position="111" status="greater than"/>
    </location>
</feature>
<feature type="glycosylation site" description="N-linked (GlcNAc...) asparagine" evidence="1">
    <location>
        <position position="41"/>
    </location>
</feature>
<feature type="disulfide bond" evidence="2">
    <location>
        <begin position="42"/>
        <end position="108"/>
    </location>
</feature>
<feature type="non-terminal residue">
    <location>
        <position position="111"/>
    </location>
</feature>
<dbReference type="EMBL" id="AC245505">
    <property type="status" value="NOT_ANNOTATED_CDS"/>
    <property type="molecule type" value="Genomic_DNA"/>
</dbReference>
<dbReference type="SMR" id="A0A075B6X5"/>
<dbReference type="FunCoup" id="A0A075B6X5">
    <property type="interactions" value="341"/>
</dbReference>
<dbReference type="IntAct" id="A0A075B6X5">
    <property type="interactions" value="1"/>
</dbReference>
<dbReference type="IMGT_GENE-DB" id="TRAV18"/>
<dbReference type="GlyCosmos" id="A0A075B6X5">
    <property type="glycosylation" value="1 site, No reported glycans"/>
</dbReference>
<dbReference type="GlyGen" id="A0A075B6X5">
    <property type="glycosylation" value="1 site"/>
</dbReference>
<dbReference type="BioMuta" id="TRAV18"/>
<dbReference type="Ensembl" id="ENST00000390446.3">
    <property type="protein sequence ID" value="ENSP00000451574.1"/>
    <property type="gene ID" value="ENSG00000211798.3"/>
</dbReference>
<dbReference type="UCSC" id="uc058zea.1">
    <property type="organism name" value="human"/>
</dbReference>
<dbReference type="AGR" id="HGNC:12114"/>
<dbReference type="GeneCards" id="TRAV18"/>
<dbReference type="HGNC" id="HGNC:12114">
    <property type="gene designation" value="TRAV18"/>
</dbReference>
<dbReference type="HPA" id="ENSG00000211798">
    <property type="expression patterns" value="Tissue enriched (lymphoid)"/>
</dbReference>
<dbReference type="neXtProt" id="NX_A0A075B6X5"/>
<dbReference type="VEuPathDB" id="HostDB:ENSG00000211798"/>
<dbReference type="GeneTree" id="ENSGT00940000163502"/>
<dbReference type="HOGENOM" id="CLU_077975_8_0_1"/>
<dbReference type="InParanoid" id="A0A075B6X5"/>
<dbReference type="OMA" id="FLFWCVQ"/>
<dbReference type="OrthoDB" id="8947657at2759"/>
<dbReference type="PAN-GO" id="A0A075B6X5">
    <property type="GO annotations" value="3 GO annotations based on evolutionary models"/>
</dbReference>
<dbReference type="PhylomeDB" id="A0A075B6X5"/>
<dbReference type="ChiTaRS" id="TRAV18">
    <property type="organism name" value="human"/>
</dbReference>
<dbReference type="Pharos" id="A0A075B6X5">
    <property type="development level" value="Tdark"/>
</dbReference>
<dbReference type="PRO" id="PR:A0A075B6X5"/>
<dbReference type="Proteomes" id="UP000005640">
    <property type="component" value="Chromosome 14"/>
</dbReference>
<dbReference type="RNAct" id="A0A075B6X5">
    <property type="molecule type" value="protein"/>
</dbReference>
<dbReference type="Bgee" id="ENSG00000211798">
    <property type="expression patterns" value="Expressed in primordial germ cell in gonad and 66 other cell types or tissues"/>
</dbReference>
<dbReference type="GO" id="GO:0042101">
    <property type="term" value="C:T cell receptor complex"/>
    <property type="evidence" value="ECO:0007669"/>
    <property type="project" value="UniProtKB-KW"/>
</dbReference>
<dbReference type="GO" id="GO:0002250">
    <property type="term" value="P:adaptive immune response"/>
    <property type="evidence" value="ECO:0007669"/>
    <property type="project" value="UniProtKB-KW"/>
</dbReference>
<dbReference type="FunFam" id="2.60.40.10:FF:002313">
    <property type="entry name" value="T cell receptor alpha variable 18"/>
    <property type="match status" value="1"/>
</dbReference>
<dbReference type="Gene3D" id="2.60.40.10">
    <property type="entry name" value="Immunoglobulins"/>
    <property type="match status" value="1"/>
</dbReference>
<dbReference type="InterPro" id="IPR007110">
    <property type="entry name" value="Ig-like_dom"/>
</dbReference>
<dbReference type="InterPro" id="IPR036179">
    <property type="entry name" value="Ig-like_dom_sf"/>
</dbReference>
<dbReference type="InterPro" id="IPR013783">
    <property type="entry name" value="Ig-like_fold"/>
</dbReference>
<dbReference type="InterPro" id="IPR013106">
    <property type="entry name" value="Ig_V-set"/>
</dbReference>
<dbReference type="InterPro" id="IPR051287">
    <property type="entry name" value="TCR_variable_region"/>
</dbReference>
<dbReference type="PANTHER" id="PTHR19367:SF42">
    <property type="entry name" value="T CELL RECEPTOR ALPHA VARIABLE 18"/>
    <property type="match status" value="1"/>
</dbReference>
<dbReference type="PANTHER" id="PTHR19367">
    <property type="entry name" value="T-CELL RECEPTOR ALPHA CHAIN V REGION"/>
    <property type="match status" value="1"/>
</dbReference>
<dbReference type="Pfam" id="PF07686">
    <property type="entry name" value="V-set"/>
    <property type="match status" value="1"/>
</dbReference>
<dbReference type="SMART" id="SM00406">
    <property type="entry name" value="IGv"/>
    <property type="match status" value="1"/>
</dbReference>
<dbReference type="SUPFAM" id="SSF48726">
    <property type="entry name" value="Immunoglobulin"/>
    <property type="match status" value="1"/>
</dbReference>
<dbReference type="PROSITE" id="PS50835">
    <property type="entry name" value="IG_LIKE"/>
    <property type="match status" value="1"/>
</dbReference>
<evidence type="ECO:0000255" key="1"/>
<evidence type="ECO:0000255" key="2">
    <source>
        <dbReference type="PROSITE-ProRule" id="PRU00114"/>
    </source>
</evidence>
<evidence type="ECO:0000303" key="3">
    <source>
    </source>
</evidence>
<evidence type="ECO:0000303" key="4">
    <source>
    </source>
</evidence>
<evidence type="ECO:0000303" key="5">
    <source>
    </source>
</evidence>
<evidence type="ECO:0000303" key="6">
    <source>
    </source>
</evidence>
<evidence type="ECO:0000303" key="7">
    <source>
    </source>
</evidence>
<evidence type="ECO:0000303" key="8">
    <source ref="2"/>
</evidence>
<evidence type="ECO:0000305" key="9"/>
<proteinExistence type="inferred from homology"/>